<reference key="1">
    <citation type="submission" date="1998-10" db="EMBL/GenBank/DDBJ databases">
        <title>Mutations in Borrelia hermsii gyrB confer resistance to coumermycin A1.</title>
        <authorList>
            <person name="Samuels D.S."/>
            <person name="Kimmel B.J."/>
            <person name="Huang W.M."/>
        </authorList>
    </citation>
    <scope>NUCLEOTIDE SEQUENCE [GENOMIC DNA]</scope>
    <source>
        <strain>ATCC 35209 / HS1</strain>
    </source>
</reference>
<sequence>MSYVASNIQVLKGLEAVRKRPGMYIGSVSINGLHHLVYEVVDNSIDEALAGFCDKIEVVINSDNSVTVNDNGRGIPTDVHEEEGISALELVLTKLHSGGKFNKGTYKVSGGLHGVGISVVNALSSFLAVIVSRDGKLFKQTYSRGIPTSEVDIIGVSSARGTKVTFLADSEIFETLEYDFETLSKRLRELAFLNDKIRISIEDRRSGKEKFLEFYFEGGIKAFVDYITNNSKNIQNEPYFIEGSCDDVIVSVGLKWTEGYSDHILSFVNNINTREGGTHVAGFKSGFLKAMSEAFRDSKISKKDVPSLTLDDFKEGLTAVISIKIPEPQFEGQTKGKLGNSYVKKIVETIVHDGLLKVIDDNLLEVDIILNKAIRAARAREAARKARESERKKSAFESLALPGKLADCASKNPAEREIYIVEGDSAGGSAKMGRDRFSQAILPLWGKMLNVEKTREDKVITNDKLIPIIASLGAGVGKTFYIEKLRYHKIIIMADADVDGSHIRTLLLTFFFRYMRELIENGHVYIAMPPLYKLKYENREHYFYDDLEKEAFLGSIETGKRDKVSLQRYKGLGEMNPTQLWETTMNPATRKMKLIKINDAIQAEKIFVTLMGDDVEPRREFIEQNALDVVNLDV</sequence>
<comment type="function">
    <text evidence="1">A type II topoisomerase that negatively supercoils closed circular double-stranded (ds) DNA in an ATP-dependent manner to modulate DNA topology and maintain chromosomes in an underwound state. Negative supercoiling favors strand separation, and DNA replication, transcription, recombination and repair, all of which involve strand separation. Also able to catalyze the interconversion of other topological isomers of dsDNA rings, including catenanes and knotted rings. Type II topoisomerases break and join 2 DNA strands simultaneously in an ATP-dependent manner.</text>
</comment>
<comment type="catalytic activity">
    <reaction evidence="1">
        <text>ATP-dependent breakage, passage and rejoining of double-stranded DNA.</text>
        <dbReference type="EC" id="5.6.2.2"/>
    </reaction>
</comment>
<comment type="cofactor">
    <cofactor evidence="1">
        <name>Mg(2+)</name>
        <dbReference type="ChEBI" id="CHEBI:18420"/>
    </cofactor>
    <cofactor evidence="1">
        <name>Mn(2+)</name>
        <dbReference type="ChEBI" id="CHEBI:29035"/>
    </cofactor>
    <cofactor evidence="1">
        <name>Ca(2+)</name>
        <dbReference type="ChEBI" id="CHEBI:29108"/>
    </cofactor>
    <text evidence="1">Binds two Mg(2+) per subunit. The magnesium ions form salt bridges with both the protein and the DNA. Can also accept other divalent metal cations, such as Mn(2+) or Ca(2+).</text>
</comment>
<comment type="subunit">
    <text evidence="1">Heterotetramer, composed of two GyrA and two GyrB chains. In the heterotetramer, GyrA contains the active site tyrosine that forms a transient covalent intermediate with DNA, while GyrB binds cofactors and catalyzes ATP hydrolysis.</text>
</comment>
<comment type="subcellular location">
    <subcellularLocation>
        <location evidence="1">Cytoplasm</location>
    </subcellularLocation>
</comment>
<comment type="miscellaneous">
    <text evidence="1">Few gyrases are as efficient as E.coli at forming negative supercoils. Not all organisms have 2 type II topoisomerases; in organisms with a single type II topoisomerase this enzyme also has to decatenate newly replicated chromosomes.</text>
</comment>
<comment type="similarity">
    <text evidence="1">Belongs to the type II topoisomerase GyrB family.</text>
</comment>
<protein>
    <recommendedName>
        <fullName evidence="1">DNA gyrase subunit B</fullName>
        <ecNumber evidence="1">5.6.2.2</ecNumber>
    </recommendedName>
</protein>
<evidence type="ECO:0000255" key="1">
    <source>
        <dbReference type="HAMAP-Rule" id="MF_01898"/>
    </source>
</evidence>
<keyword id="KW-0067">ATP-binding</keyword>
<keyword id="KW-0963">Cytoplasm</keyword>
<keyword id="KW-0238">DNA-binding</keyword>
<keyword id="KW-0413">Isomerase</keyword>
<keyword id="KW-0460">Magnesium</keyword>
<keyword id="KW-0479">Metal-binding</keyword>
<keyword id="KW-0547">Nucleotide-binding</keyword>
<keyword id="KW-0799">Topoisomerase</keyword>
<proteinExistence type="inferred from homology"/>
<feature type="chain" id="PRO_0000145297" description="DNA gyrase subunit B">
    <location>
        <begin position="1"/>
        <end position="634"/>
    </location>
</feature>
<feature type="domain" description="Toprim" evidence="1">
    <location>
        <begin position="416"/>
        <end position="530"/>
    </location>
</feature>
<feature type="binding site" evidence="1">
    <location>
        <position position="422"/>
    </location>
    <ligand>
        <name>Mg(2+)</name>
        <dbReference type="ChEBI" id="CHEBI:18420"/>
        <label>1</label>
        <note>catalytic</note>
    </ligand>
</feature>
<feature type="binding site" evidence="1">
    <location>
        <position position="495"/>
    </location>
    <ligand>
        <name>Mg(2+)</name>
        <dbReference type="ChEBI" id="CHEBI:18420"/>
        <label>1</label>
        <note>catalytic</note>
    </ligand>
</feature>
<feature type="binding site" evidence="1">
    <location>
        <position position="495"/>
    </location>
    <ligand>
        <name>Mg(2+)</name>
        <dbReference type="ChEBI" id="CHEBI:18420"/>
        <label>2</label>
    </ligand>
</feature>
<feature type="binding site" evidence="1">
    <location>
        <position position="497"/>
    </location>
    <ligand>
        <name>Mg(2+)</name>
        <dbReference type="ChEBI" id="CHEBI:18420"/>
        <label>2</label>
    </ligand>
</feature>
<feature type="site" description="Interaction with DNA" evidence="1">
    <location>
        <position position="447"/>
    </location>
</feature>
<feature type="site" description="Interaction with DNA" evidence="1">
    <location>
        <position position="450"/>
    </location>
</feature>
<accession>Q9ZFK1</accession>
<dbReference type="EC" id="5.6.2.2" evidence="1"/>
<dbReference type="EMBL" id="AF098862">
    <property type="protein sequence ID" value="AAC72846.1"/>
    <property type="molecule type" value="Genomic_DNA"/>
</dbReference>
<dbReference type="RefSeq" id="WP_043924439.1">
    <property type="nucleotide sequence ID" value="NZ_CP161006.1"/>
</dbReference>
<dbReference type="SMR" id="Q9ZFK1"/>
<dbReference type="STRING" id="140.A0V01_02170"/>
<dbReference type="GeneID" id="71843247"/>
<dbReference type="eggNOG" id="COG0187">
    <property type="taxonomic scope" value="Bacteria"/>
</dbReference>
<dbReference type="OrthoDB" id="9802808at2"/>
<dbReference type="GO" id="GO:0005694">
    <property type="term" value="C:chromosome"/>
    <property type="evidence" value="ECO:0007669"/>
    <property type="project" value="InterPro"/>
</dbReference>
<dbReference type="GO" id="GO:0005737">
    <property type="term" value="C:cytoplasm"/>
    <property type="evidence" value="ECO:0007669"/>
    <property type="project" value="UniProtKB-SubCell"/>
</dbReference>
<dbReference type="GO" id="GO:0005524">
    <property type="term" value="F:ATP binding"/>
    <property type="evidence" value="ECO:0007669"/>
    <property type="project" value="UniProtKB-UniRule"/>
</dbReference>
<dbReference type="GO" id="GO:0003677">
    <property type="term" value="F:DNA binding"/>
    <property type="evidence" value="ECO:0007669"/>
    <property type="project" value="UniProtKB-KW"/>
</dbReference>
<dbReference type="GO" id="GO:0003918">
    <property type="term" value="F:DNA topoisomerase type II (double strand cut, ATP-hydrolyzing) activity"/>
    <property type="evidence" value="ECO:0007669"/>
    <property type="project" value="UniProtKB-UniRule"/>
</dbReference>
<dbReference type="GO" id="GO:0046872">
    <property type="term" value="F:metal ion binding"/>
    <property type="evidence" value="ECO:0007669"/>
    <property type="project" value="UniProtKB-KW"/>
</dbReference>
<dbReference type="GO" id="GO:0006265">
    <property type="term" value="P:DNA topological change"/>
    <property type="evidence" value="ECO:0007669"/>
    <property type="project" value="UniProtKB-UniRule"/>
</dbReference>
<dbReference type="GO" id="GO:0006261">
    <property type="term" value="P:DNA-templated DNA replication"/>
    <property type="evidence" value="ECO:0007669"/>
    <property type="project" value="UniProtKB-UniRule"/>
</dbReference>
<dbReference type="CDD" id="cd16928">
    <property type="entry name" value="HATPase_GyrB-like"/>
    <property type="match status" value="1"/>
</dbReference>
<dbReference type="CDD" id="cd00822">
    <property type="entry name" value="TopoII_Trans_DNA_gyrase"/>
    <property type="match status" value="1"/>
</dbReference>
<dbReference type="CDD" id="cd03366">
    <property type="entry name" value="TOPRIM_TopoIIA_GyrB"/>
    <property type="match status" value="1"/>
</dbReference>
<dbReference type="FunFam" id="3.30.565.10:FF:000002">
    <property type="entry name" value="DNA gyrase subunit B"/>
    <property type="match status" value="1"/>
</dbReference>
<dbReference type="FunFam" id="3.40.50.670:FF:000002">
    <property type="entry name" value="DNA gyrase subunit B"/>
    <property type="match status" value="1"/>
</dbReference>
<dbReference type="Gene3D" id="3.30.230.10">
    <property type="match status" value="1"/>
</dbReference>
<dbReference type="Gene3D" id="3.40.50.670">
    <property type="match status" value="1"/>
</dbReference>
<dbReference type="Gene3D" id="3.30.565.10">
    <property type="entry name" value="Histidine kinase-like ATPase, C-terminal domain"/>
    <property type="match status" value="1"/>
</dbReference>
<dbReference type="HAMAP" id="MF_01898">
    <property type="entry name" value="GyrB"/>
    <property type="match status" value="1"/>
</dbReference>
<dbReference type="InterPro" id="IPR002288">
    <property type="entry name" value="DNA_gyrase_B_C"/>
</dbReference>
<dbReference type="InterPro" id="IPR011557">
    <property type="entry name" value="GyrB"/>
</dbReference>
<dbReference type="InterPro" id="IPR036890">
    <property type="entry name" value="HATPase_C_sf"/>
</dbReference>
<dbReference type="InterPro" id="IPR020568">
    <property type="entry name" value="Ribosomal_Su5_D2-typ_SF"/>
</dbReference>
<dbReference type="InterPro" id="IPR014721">
    <property type="entry name" value="Ribsml_uS5_D2-typ_fold_subgr"/>
</dbReference>
<dbReference type="InterPro" id="IPR001241">
    <property type="entry name" value="Topo_IIA"/>
</dbReference>
<dbReference type="InterPro" id="IPR013760">
    <property type="entry name" value="Topo_IIA-like_dom_sf"/>
</dbReference>
<dbReference type="InterPro" id="IPR000565">
    <property type="entry name" value="Topo_IIA_B"/>
</dbReference>
<dbReference type="InterPro" id="IPR013759">
    <property type="entry name" value="Topo_IIA_B_C"/>
</dbReference>
<dbReference type="InterPro" id="IPR013506">
    <property type="entry name" value="Topo_IIA_bsu_dom2"/>
</dbReference>
<dbReference type="InterPro" id="IPR018522">
    <property type="entry name" value="TopoIIA_CS"/>
</dbReference>
<dbReference type="InterPro" id="IPR006171">
    <property type="entry name" value="TOPRIM_dom"/>
</dbReference>
<dbReference type="InterPro" id="IPR034160">
    <property type="entry name" value="TOPRIM_GyrB"/>
</dbReference>
<dbReference type="NCBIfam" id="TIGR01059">
    <property type="entry name" value="gyrB"/>
    <property type="match status" value="1"/>
</dbReference>
<dbReference type="NCBIfam" id="NF004189">
    <property type="entry name" value="PRK05644.1"/>
    <property type="match status" value="1"/>
</dbReference>
<dbReference type="NCBIfam" id="NF011501">
    <property type="entry name" value="PRK14939.1"/>
    <property type="match status" value="1"/>
</dbReference>
<dbReference type="PANTHER" id="PTHR45866:SF1">
    <property type="entry name" value="DNA GYRASE SUBUNIT B, MITOCHONDRIAL"/>
    <property type="match status" value="1"/>
</dbReference>
<dbReference type="PANTHER" id="PTHR45866">
    <property type="entry name" value="DNA GYRASE/TOPOISOMERASE SUBUNIT B"/>
    <property type="match status" value="1"/>
</dbReference>
<dbReference type="Pfam" id="PF00204">
    <property type="entry name" value="DNA_gyraseB"/>
    <property type="match status" value="1"/>
</dbReference>
<dbReference type="Pfam" id="PF00986">
    <property type="entry name" value="DNA_gyraseB_C"/>
    <property type="match status" value="1"/>
</dbReference>
<dbReference type="Pfam" id="PF02518">
    <property type="entry name" value="HATPase_c"/>
    <property type="match status" value="1"/>
</dbReference>
<dbReference type="Pfam" id="PF01751">
    <property type="entry name" value="Toprim"/>
    <property type="match status" value="1"/>
</dbReference>
<dbReference type="PRINTS" id="PR01159">
    <property type="entry name" value="DNAGYRASEB"/>
</dbReference>
<dbReference type="PRINTS" id="PR00418">
    <property type="entry name" value="TPI2FAMILY"/>
</dbReference>
<dbReference type="SMART" id="SM00387">
    <property type="entry name" value="HATPase_c"/>
    <property type="match status" value="1"/>
</dbReference>
<dbReference type="SMART" id="SM00433">
    <property type="entry name" value="TOP2c"/>
    <property type="match status" value="1"/>
</dbReference>
<dbReference type="SUPFAM" id="SSF55874">
    <property type="entry name" value="ATPase domain of HSP90 chaperone/DNA topoisomerase II/histidine kinase"/>
    <property type="match status" value="1"/>
</dbReference>
<dbReference type="SUPFAM" id="SSF54211">
    <property type="entry name" value="Ribosomal protein S5 domain 2-like"/>
    <property type="match status" value="1"/>
</dbReference>
<dbReference type="SUPFAM" id="SSF56719">
    <property type="entry name" value="Type II DNA topoisomerase"/>
    <property type="match status" value="1"/>
</dbReference>
<dbReference type="PROSITE" id="PS00177">
    <property type="entry name" value="TOPOISOMERASE_II"/>
    <property type="match status" value="1"/>
</dbReference>
<dbReference type="PROSITE" id="PS50880">
    <property type="entry name" value="TOPRIM"/>
    <property type="match status" value="1"/>
</dbReference>
<name>GYRB_BORHE</name>
<organism>
    <name type="scientific">Borrelia hermsii</name>
    <dbReference type="NCBI Taxonomy" id="140"/>
    <lineage>
        <taxon>Bacteria</taxon>
        <taxon>Pseudomonadati</taxon>
        <taxon>Spirochaetota</taxon>
        <taxon>Spirochaetia</taxon>
        <taxon>Spirochaetales</taxon>
        <taxon>Borreliaceae</taxon>
        <taxon>Borrelia</taxon>
    </lineage>
</organism>
<gene>
    <name evidence="1" type="primary">gyrB</name>
</gene>